<protein>
    <recommendedName>
        <fullName evidence="1">Molybdenum import ATP-binding protein ModC</fullName>
        <ecNumber evidence="1">7.3.2.5</ecNumber>
    </recommendedName>
</protein>
<gene>
    <name evidence="1" type="primary">modC</name>
    <name type="ordered locus">VC_A0724</name>
</gene>
<proteinExistence type="inferred from homology"/>
<evidence type="ECO:0000255" key="1">
    <source>
        <dbReference type="HAMAP-Rule" id="MF_01705"/>
    </source>
</evidence>
<evidence type="ECO:0000255" key="2">
    <source>
        <dbReference type="PROSITE-ProRule" id="PRU01213"/>
    </source>
</evidence>
<accession>Q9KLL9</accession>
<sequence length="366" mass="40664">MSEVILQLQKRLGETQLDVDLRLPAVGICAIFGRSGAGKTSLINLISGLTTPDVGEIHLAGRTLFSSSQGIQLPIEQRKIGYVFQDARLFPHYTVRGNLNYGVTDADPEYFASVTRLLALEPLLVRYPRDLSGGEKQRVAIGRALLSKPDLLLMDEPLASLDMPRKKEVMPFLENLAQHFRLPILYVSHSMQEILRLADHLVVLEQGKVLSAGPIEQVWSSKAMRPWQSFSEQSTLFSATVAKHHQTYGLTQVRLAEDVWLWVQQVEADVGSSVRMQVRANDVSIALDKPTASSIRNILPARIVAIEHQQPSKKSVSLKLELAPHCYLWAVVTEWAHAELALEVGMPVFAQIKGVSVAQRDVILTN</sequence>
<organism>
    <name type="scientific">Vibrio cholerae serotype O1 (strain ATCC 39315 / El Tor Inaba N16961)</name>
    <dbReference type="NCBI Taxonomy" id="243277"/>
    <lineage>
        <taxon>Bacteria</taxon>
        <taxon>Pseudomonadati</taxon>
        <taxon>Pseudomonadota</taxon>
        <taxon>Gammaproteobacteria</taxon>
        <taxon>Vibrionales</taxon>
        <taxon>Vibrionaceae</taxon>
        <taxon>Vibrio</taxon>
    </lineage>
</organism>
<reference key="1">
    <citation type="journal article" date="2000" name="Nature">
        <title>DNA sequence of both chromosomes of the cholera pathogen Vibrio cholerae.</title>
        <authorList>
            <person name="Heidelberg J.F."/>
            <person name="Eisen J.A."/>
            <person name="Nelson W.C."/>
            <person name="Clayton R.A."/>
            <person name="Gwinn M.L."/>
            <person name="Dodson R.J."/>
            <person name="Haft D.H."/>
            <person name="Hickey E.K."/>
            <person name="Peterson J.D."/>
            <person name="Umayam L.A."/>
            <person name="Gill S.R."/>
            <person name="Nelson K.E."/>
            <person name="Read T.D."/>
            <person name="Tettelin H."/>
            <person name="Richardson D.L."/>
            <person name="Ermolaeva M.D."/>
            <person name="Vamathevan J.J."/>
            <person name="Bass S."/>
            <person name="Qin H."/>
            <person name="Dragoi I."/>
            <person name="Sellers P."/>
            <person name="McDonald L.A."/>
            <person name="Utterback T.R."/>
            <person name="Fleischmann R.D."/>
            <person name="Nierman W.C."/>
            <person name="White O."/>
            <person name="Salzberg S.L."/>
            <person name="Smith H.O."/>
            <person name="Colwell R.R."/>
            <person name="Mekalanos J.J."/>
            <person name="Venter J.C."/>
            <person name="Fraser C.M."/>
        </authorList>
    </citation>
    <scope>NUCLEOTIDE SEQUENCE [LARGE SCALE GENOMIC DNA]</scope>
    <source>
        <strain>ATCC 39315 / El Tor Inaba N16961</strain>
    </source>
</reference>
<dbReference type="EC" id="7.3.2.5" evidence="1"/>
<dbReference type="EMBL" id="AE003853">
    <property type="protein sequence ID" value="AAF96623.1"/>
    <property type="molecule type" value="Genomic_DNA"/>
</dbReference>
<dbReference type="PIR" id="H82425">
    <property type="entry name" value="H82425"/>
</dbReference>
<dbReference type="RefSeq" id="NP_233111.1">
    <property type="nucleotide sequence ID" value="NC_002506.1"/>
</dbReference>
<dbReference type="RefSeq" id="WP_000005533.1">
    <property type="nucleotide sequence ID" value="NZ_LT906615.1"/>
</dbReference>
<dbReference type="SMR" id="Q9KLL9"/>
<dbReference type="STRING" id="243277.VC_A0724"/>
<dbReference type="DNASU" id="2611973"/>
<dbReference type="EnsemblBacteria" id="AAF96623">
    <property type="protein sequence ID" value="AAF96623"/>
    <property type="gene ID" value="VC_A0724"/>
</dbReference>
<dbReference type="KEGG" id="vch:VC_A0724"/>
<dbReference type="PATRIC" id="fig|243277.26.peg.3347"/>
<dbReference type="eggNOG" id="COG4148">
    <property type="taxonomic scope" value="Bacteria"/>
</dbReference>
<dbReference type="HOGENOM" id="CLU_000604_1_1_6"/>
<dbReference type="Proteomes" id="UP000000584">
    <property type="component" value="Chromosome 2"/>
</dbReference>
<dbReference type="GO" id="GO:0005886">
    <property type="term" value="C:plasma membrane"/>
    <property type="evidence" value="ECO:0007669"/>
    <property type="project" value="UniProtKB-SubCell"/>
</dbReference>
<dbReference type="GO" id="GO:0015412">
    <property type="term" value="F:ABC-type molybdate transporter activity"/>
    <property type="evidence" value="ECO:0007669"/>
    <property type="project" value="UniProtKB-EC"/>
</dbReference>
<dbReference type="GO" id="GO:0005524">
    <property type="term" value="F:ATP binding"/>
    <property type="evidence" value="ECO:0007669"/>
    <property type="project" value="UniProtKB-KW"/>
</dbReference>
<dbReference type="GO" id="GO:0016887">
    <property type="term" value="F:ATP hydrolysis activity"/>
    <property type="evidence" value="ECO:0007669"/>
    <property type="project" value="InterPro"/>
</dbReference>
<dbReference type="FunFam" id="3.40.50.300:FF:000634">
    <property type="entry name" value="Molybdenum import ATP-binding protein ModC"/>
    <property type="match status" value="1"/>
</dbReference>
<dbReference type="Gene3D" id="2.40.50.100">
    <property type="match status" value="1"/>
</dbReference>
<dbReference type="Gene3D" id="3.40.50.300">
    <property type="entry name" value="P-loop containing nucleotide triphosphate hydrolases"/>
    <property type="match status" value="1"/>
</dbReference>
<dbReference type="InterPro" id="IPR003593">
    <property type="entry name" value="AAA+_ATPase"/>
</dbReference>
<dbReference type="InterPro" id="IPR003439">
    <property type="entry name" value="ABC_transporter-like_ATP-bd"/>
</dbReference>
<dbReference type="InterPro" id="IPR017871">
    <property type="entry name" value="ABC_transporter-like_CS"/>
</dbReference>
<dbReference type="InterPro" id="IPR008995">
    <property type="entry name" value="Mo/tungstate-bd_C_term_dom"/>
</dbReference>
<dbReference type="InterPro" id="IPR011868">
    <property type="entry name" value="ModC_ABC_ATP-bd"/>
</dbReference>
<dbReference type="InterPro" id="IPR050334">
    <property type="entry name" value="Molybdenum_import_ModC"/>
</dbReference>
<dbReference type="InterPro" id="IPR004606">
    <property type="entry name" value="Mop_domain"/>
</dbReference>
<dbReference type="InterPro" id="IPR027417">
    <property type="entry name" value="P-loop_NTPase"/>
</dbReference>
<dbReference type="InterPro" id="IPR005116">
    <property type="entry name" value="Transp-assoc_OB_typ1"/>
</dbReference>
<dbReference type="NCBIfam" id="TIGR02142">
    <property type="entry name" value="modC_ABC"/>
    <property type="match status" value="1"/>
</dbReference>
<dbReference type="NCBIfam" id="NF008355">
    <property type="entry name" value="PRK11144.1"/>
    <property type="match status" value="1"/>
</dbReference>
<dbReference type="PANTHER" id="PTHR43514">
    <property type="entry name" value="ABC TRANSPORTER I FAMILY MEMBER 10"/>
    <property type="match status" value="1"/>
</dbReference>
<dbReference type="PANTHER" id="PTHR43514:SF4">
    <property type="entry name" value="ABC TRANSPORTER I FAMILY MEMBER 10"/>
    <property type="match status" value="1"/>
</dbReference>
<dbReference type="Pfam" id="PF00005">
    <property type="entry name" value="ABC_tran"/>
    <property type="match status" value="1"/>
</dbReference>
<dbReference type="Pfam" id="PF03459">
    <property type="entry name" value="TOBE"/>
    <property type="match status" value="1"/>
</dbReference>
<dbReference type="SMART" id="SM00382">
    <property type="entry name" value="AAA"/>
    <property type="match status" value="1"/>
</dbReference>
<dbReference type="SUPFAM" id="SSF50331">
    <property type="entry name" value="MOP-like"/>
    <property type="match status" value="1"/>
</dbReference>
<dbReference type="SUPFAM" id="SSF52540">
    <property type="entry name" value="P-loop containing nucleoside triphosphate hydrolases"/>
    <property type="match status" value="1"/>
</dbReference>
<dbReference type="PROSITE" id="PS00211">
    <property type="entry name" value="ABC_TRANSPORTER_1"/>
    <property type="match status" value="1"/>
</dbReference>
<dbReference type="PROSITE" id="PS50893">
    <property type="entry name" value="ABC_TRANSPORTER_2"/>
    <property type="match status" value="1"/>
</dbReference>
<dbReference type="PROSITE" id="PS51241">
    <property type="entry name" value="MODC"/>
    <property type="match status" value="1"/>
</dbReference>
<dbReference type="PROSITE" id="PS51866">
    <property type="entry name" value="MOP"/>
    <property type="match status" value="1"/>
</dbReference>
<keyword id="KW-0067">ATP-binding</keyword>
<keyword id="KW-0997">Cell inner membrane</keyword>
<keyword id="KW-1003">Cell membrane</keyword>
<keyword id="KW-0472">Membrane</keyword>
<keyword id="KW-0500">Molybdenum</keyword>
<keyword id="KW-0547">Nucleotide-binding</keyword>
<keyword id="KW-1185">Reference proteome</keyword>
<keyword id="KW-1278">Translocase</keyword>
<keyword id="KW-0813">Transport</keyword>
<feature type="chain" id="PRO_0000092559" description="Molybdenum import ATP-binding protein ModC">
    <location>
        <begin position="1"/>
        <end position="366"/>
    </location>
</feature>
<feature type="domain" description="ABC transporter" evidence="1">
    <location>
        <begin position="1"/>
        <end position="231"/>
    </location>
</feature>
<feature type="domain" description="Mop" evidence="2">
    <location>
        <begin position="292"/>
        <end position="361"/>
    </location>
</feature>
<feature type="binding site" evidence="1">
    <location>
        <begin position="33"/>
        <end position="40"/>
    </location>
    <ligand>
        <name>ATP</name>
        <dbReference type="ChEBI" id="CHEBI:30616"/>
    </ligand>
</feature>
<comment type="function">
    <text evidence="1">Part of the ABC transporter complex ModABC involved in molybdenum import. Responsible for energy coupling to the transport system.</text>
</comment>
<comment type="catalytic activity">
    <reaction evidence="1">
        <text>molybdate(out) + ATP + H2O = molybdate(in) + ADP + phosphate + H(+)</text>
        <dbReference type="Rhea" id="RHEA:22020"/>
        <dbReference type="ChEBI" id="CHEBI:15377"/>
        <dbReference type="ChEBI" id="CHEBI:15378"/>
        <dbReference type="ChEBI" id="CHEBI:30616"/>
        <dbReference type="ChEBI" id="CHEBI:36264"/>
        <dbReference type="ChEBI" id="CHEBI:43474"/>
        <dbReference type="ChEBI" id="CHEBI:456216"/>
        <dbReference type="EC" id="7.3.2.5"/>
    </reaction>
</comment>
<comment type="subunit">
    <text evidence="1">The complex is composed of two ATP-binding proteins (ModC), two transmembrane proteins (ModB) and a solute-binding protein (ModA).</text>
</comment>
<comment type="subcellular location">
    <subcellularLocation>
        <location evidence="1">Cell inner membrane</location>
        <topology evidence="1">Peripheral membrane protein</topology>
    </subcellularLocation>
</comment>
<comment type="similarity">
    <text evidence="1">Belongs to the ABC transporter superfamily. Molybdate importer (TC 3.A.1.8) family.</text>
</comment>
<name>MODC_VIBCH</name>